<sequence length="77" mass="8327">MKTSVLLVILGIAAITVQCTASESVEQDSLRTFVDTVLGWNAEMASEARCGGWMAKCADSDDCCETFHCTRFNVCGK</sequence>
<proteinExistence type="evidence at protein level"/>
<organism>
    <name type="scientific">Chilobrachys guangxiensis</name>
    <name type="common">Chinese earth tiger tarantula</name>
    <name type="synonym">Chilobrachys jingzhao</name>
    <dbReference type="NCBI Taxonomy" id="278060"/>
    <lineage>
        <taxon>Eukaryota</taxon>
        <taxon>Metazoa</taxon>
        <taxon>Ecdysozoa</taxon>
        <taxon>Arthropoda</taxon>
        <taxon>Chelicerata</taxon>
        <taxon>Arachnida</taxon>
        <taxon>Araneae</taxon>
        <taxon>Mygalomorphae</taxon>
        <taxon>Theraphosidae</taxon>
        <taxon>Chilobrachys</taxon>
    </lineage>
</organism>
<reference key="1">
    <citation type="journal article" date="2008" name="Cell. Mol. Life Sci.">
        <title>Molecular diversity and evolution of cystine knot toxins of the tarantula Chilobrachys jingzhao.</title>
        <authorList>
            <person name="Chen J."/>
            <person name="Deng M."/>
            <person name="He Q."/>
            <person name="Meng E."/>
            <person name="Jiang L."/>
            <person name="Liao Z."/>
            <person name="Rong M."/>
            <person name="Liang S."/>
        </authorList>
    </citation>
    <scope>NUCLEOTIDE SEQUENCE [LARGE SCALE MRNA]</scope>
    <source>
        <tissue>Venom gland</tissue>
    </source>
</reference>
<reference key="2">
    <citation type="journal article" date="2007" name="Proteomics">
        <title>Proteomic and peptidomic analysis of the venom from Chinese tarantula Chilobrachys jingzhao.</title>
        <authorList>
            <person name="Liao Z."/>
            <person name="Cao J."/>
            <person name="Li S."/>
            <person name="Yan X."/>
            <person name="Hu W."/>
            <person name="He Q."/>
            <person name="Chen J."/>
            <person name="Tang J."/>
            <person name="Xie J."/>
            <person name="Liang S."/>
        </authorList>
    </citation>
    <scope>PROTEIN SEQUENCE OF 50-77</scope>
    <scope>MASS SPECTROMETRY</scope>
    <scope>AMIDATION AT LYS-77</scope>
    <source>
        <tissue>Venom</tissue>
    </source>
</reference>
<comment type="function">
    <text>Probable ion channel inhibitor.</text>
</comment>
<comment type="subcellular location">
    <subcellularLocation>
        <location>Secreted</location>
    </subcellularLocation>
</comment>
<comment type="tissue specificity">
    <text>Expressed by the venom gland.</text>
</comment>
<comment type="domain">
    <text evidence="1">The presence of a 'disulfide through disulfide knot' structurally defines this protein as a knottin.</text>
</comment>
<comment type="mass spectrometry" mass="3083.0" method="MALDI" evidence="3">
    <text>Monoisotopic mass.</text>
</comment>
<comment type="similarity">
    <text evidence="5">Belongs to the neurotoxin 10 (Hwtx-1) family. 65 (Jztx-21) subfamily.</text>
</comment>
<protein>
    <recommendedName>
        <fullName>U14-theraphotoxin-Cg1a 3</fullName>
        <shortName>U14-TRTX-Cg1a</shortName>
    </recommendedName>
    <alternativeName>
        <fullName evidence="6">Jingzhaotoxin-21.3</fullName>
        <shortName evidence="6">JZTX-21.3</shortName>
    </alternativeName>
    <alternativeName>
        <fullName evidence="4">Peptide F3-11.69</fullName>
    </alternativeName>
</protein>
<feature type="signal peptide" evidence="2">
    <location>
        <begin position="1"/>
        <end position="21"/>
    </location>
</feature>
<feature type="propeptide" id="PRO_0000398443" evidence="3">
    <location>
        <begin position="22"/>
        <end position="49"/>
    </location>
</feature>
<feature type="peptide" id="PRO_0000398444" description="U14-theraphotoxin-Cg1a 3">
    <location>
        <begin position="50"/>
        <end position="77"/>
    </location>
</feature>
<feature type="modified residue" description="Lysine amide" evidence="3">
    <location>
        <position position="77"/>
    </location>
</feature>
<feature type="disulfide bond" evidence="1">
    <location>
        <begin position="50"/>
        <end position="64"/>
    </location>
</feature>
<feature type="disulfide bond" evidence="1">
    <location>
        <begin position="57"/>
        <end position="69"/>
    </location>
</feature>
<feature type="disulfide bond" evidence="1">
    <location>
        <begin position="63"/>
        <end position="75"/>
    </location>
</feature>
<evidence type="ECO:0000250" key="1"/>
<evidence type="ECO:0000255" key="2"/>
<evidence type="ECO:0000269" key="3">
    <source>
    </source>
</evidence>
<evidence type="ECO:0000303" key="4">
    <source>
    </source>
</evidence>
<evidence type="ECO:0000305" key="5"/>
<evidence type="ECO:0000312" key="6">
    <source>
        <dbReference type="EMBL" id="ABY71695.1"/>
    </source>
</evidence>
<keyword id="KW-0027">Amidation</keyword>
<keyword id="KW-0903">Direct protein sequencing</keyword>
<keyword id="KW-1015">Disulfide bond</keyword>
<keyword id="KW-0872">Ion channel impairing toxin</keyword>
<keyword id="KW-0960">Knottin</keyword>
<keyword id="KW-0964">Secreted</keyword>
<keyword id="KW-0732">Signal</keyword>
<keyword id="KW-0800">Toxin</keyword>
<name>JZ21C_CHIGU</name>
<dbReference type="EMBL" id="EU233876">
    <property type="protein sequence ID" value="ABY71695.1"/>
    <property type="molecule type" value="mRNA"/>
</dbReference>
<dbReference type="SMR" id="B1P1E5"/>
<dbReference type="ArachnoServer" id="AS000824">
    <property type="toxin name" value="U14-theraphotoxin-Cg1a"/>
</dbReference>
<dbReference type="GO" id="GO:0005576">
    <property type="term" value="C:extracellular region"/>
    <property type="evidence" value="ECO:0007669"/>
    <property type="project" value="UniProtKB-SubCell"/>
</dbReference>
<dbReference type="GO" id="GO:0099106">
    <property type="term" value="F:ion channel regulator activity"/>
    <property type="evidence" value="ECO:0007669"/>
    <property type="project" value="UniProtKB-KW"/>
</dbReference>
<dbReference type="GO" id="GO:0090729">
    <property type="term" value="F:toxin activity"/>
    <property type="evidence" value="ECO:0007669"/>
    <property type="project" value="UniProtKB-KW"/>
</dbReference>
<accession>B1P1E5</accession>